<keyword id="KW-1003">Cell membrane</keyword>
<keyword id="KW-0325">Glycoprotein</keyword>
<keyword id="KW-0433">Leucine-rich repeat</keyword>
<keyword id="KW-0472">Membrane</keyword>
<keyword id="KW-0611">Plant defense</keyword>
<keyword id="KW-0675">Receptor</keyword>
<keyword id="KW-1185">Reference proteome</keyword>
<keyword id="KW-0677">Repeat</keyword>
<keyword id="KW-0732">Signal</keyword>
<keyword id="KW-0812">Transmembrane</keyword>
<keyword id="KW-1133">Transmembrane helix</keyword>
<comment type="function">
    <text evidence="5">Involved in the perception of necrosis and ethylene-inducing peptide 1-like proteins (NLPs), that act as extracellular signals mediating immune activation. Component of the RLP23-SOBIR1-BAK1 complex that mediates NLP-triggered immunity.</text>
</comment>
<comment type="subunit">
    <text evidence="3 5">Directly interacts with a 20-mer fragment (nlp20) from NLPs through its extracellular LRR domain. Component of a trimeric complex composed of RLP23, SOBIR1 and BAK1. BAK1 is recruited into a pre-formed RLP23-SOBIR1 complex in a ligand-dependent manner (PubMed:27251392). Interacts with SOBIR1 (PubMed:24525519, PubMed:27251392).</text>
</comment>
<comment type="subcellular location">
    <subcellularLocation>
        <location evidence="7">Cell membrane</location>
        <topology evidence="7">Single-pass type I membrane protein</topology>
    </subcellularLocation>
</comment>
<comment type="induction">
    <text evidence="4">By mannitol.</text>
</comment>
<comment type="disruption phenotype">
    <text evidence="5">Impaired in nlp20-mediated immunity.</text>
</comment>
<comment type="similarity">
    <text evidence="7">Belongs to the RLP family.</text>
</comment>
<proteinExistence type="evidence at protein level"/>
<sequence>MSKALLHLHFLSLFLLCCVCHSSIFTLNFHFTGIVACRPHQIQAFTKFTNEFDTRGCNNSDTFNGVWCDNSTGAVAVLQLRKCLSGTLKSNSSLFGFHQLRYVDLQNNNLTSSSLPSGFGNLKRLEGLFLSSNGFLGQVPSSFSNLTMLAQLDLSYNKLTGSFPLVRGLRKLIVLDLSYNHFSGTLNPNSSLFELHQLRYLNLAFNNFSSSLPSKFGNLHRLENLILSSNGFSGQVPSTISNLTRLTKLYLDQNKLTSSFPLVQNLTNLYELDLSYNKFFGVIPSSLLTLPFLAHLALRENNLAGSVEVSNSSTSSRLEIMYLGSNHFEGQILEPISKLINLKHLDLSFLNTSYPIDLKLFSSLKSLRSLDLSGNSISSASLSSDSYIPLTLEMLTLRHCDINEFPNILKTLKELVYIDISNNRMKGKIPEWLWSLPLLQSVTLGNNYFTGFQGSAEILVNSSVLLLYLDSNNFEGALPDLPLSIKGFGVASNSFTSEIPLSICNRSSLAAIDLSYNNFTGPIPPCLRNLELVYLRNNNLEGSIPDALCDGASLRTLDVSHNRLTGKLPRSFVNCSSLKFLSVINNRIEDTFPFWLKALPNLQVLTLRSNRFYGPISPPHQGPLGFPELRIFEISDNKFTGSLPPNYFVNWKASSRTMNQDGGLYMVYEEKLFDEGGYGYTDALDLQYKGLHMEQAKALTSYAAIDFSGNRLEGQIPESIGLLKALIAVNISNNAFTGHIPLSMANLENLESLDMSRNQLSGTIPNGLGSISFLAYINVSHNQLTGEIPQGTQITGQSKSSFEGNAGLCGLPLKESCFGTGAPPMYHQKQEDKEEEEEEEEEEEEVLNGRAVAIGYGSGLLLGLAIAQVIASYKPEWLVKIIGLNKRRKR</sequence>
<evidence type="ECO:0000255" key="1"/>
<evidence type="ECO:0000255" key="2">
    <source>
        <dbReference type="PROSITE-ProRule" id="PRU00498"/>
    </source>
</evidence>
<evidence type="ECO:0000269" key="3">
    <source>
    </source>
</evidence>
<evidence type="ECO:0000269" key="4">
    <source>
    </source>
</evidence>
<evidence type="ECO:0000269" key="5">
    <source>
    </source>
</evidence>
<evidence type="ECO:0000303" key="6">
    <source>
    </source>
</evidence>
<evidence type="ECO:0000305" key="7"/>
<evidence type="ECO:0000312" key="8">
    <source>
        <dbReference type="Araport" id="AT2G32680"/>
    </source>
</evidence>
<evidence type="ECO:0000312" key="9">
    <source>
        <dbReference type="EMBL" id="AAC04495.1"/>
    </source>
</evidence>
<feature type="signal peptide" evidence="1">
    <location>
        <begin position="1"/>
        <end position="22"/>
    </location>
</feature>
<feature type="chain" id="PRO_5011945105" description="Receptor like protein 23">
    <location>
        <begin position="23"/>
        <end position="890"/>
    </location>
</feature>
<feature type="topological domain" description="Extracellular" evidence="1">
    <location>
        <begin position="23"/>
        <end position="850"/>
    </location>
</feature>
<feature type="transmembrane region" description="Helical" evidence="1">
    <location>
        <begin position="851"/>
        <end position="871"/>
    </location>
</feature>
<feature type="topological domain" description="Cytoplasmic" evidence="1">
    <location>
        <begin position="872"/>
        <end position="890"/>
    </location>
</feature>
<feature type="repeat" description="LRR 1" evidence="1">
    <location>
        <begin position="97"/>
        <end position="121"/>
    </location>
</feature>
<feature type="repeat" description="LRR 2" evidence="1">
    <location>
        <begin position="123"/>
        <end position="145"/>
    </location>
</feature>
<feature type="repeat" description="LRR 3" evidence="1">
    <location>
        <begin position="146"/>
        <end position="171"/>
    </location>
</feature>
<feature type="repeat" description="LRR 4" evidence="1">
    <location>
        <begin position="173"/>
        <end position="195"/>
    </location>
</feature>
<feature type="repeat" description="LRR 5" evidence="1">
    <location>
        <begin position="196"/>
        <end position="218"/>
    </location>
</feature>
<feature type="repeat" description="LRR 6" evidence="1">
    <location>
        <begin position="220"/>
        <end position="243"/>
    </location>
</feature>
<feature type="repeat" description="LRR 7" evidence="1">
    <location>
        <begin position="244"/>
        <end position="268"/>
    </location>
</feature>
<feature type="repeat" description="LRR 8" evidence="1">
    <location>
        <begin position="270"/>
        <end position="290"/>
    </location>
</feature>
<feature type="repeat" description="LRR 9" evidence="1">
    <location>
        <begin position="291"/>
        <end position="316"/>
    </location>
</feature>
<feature type="repeat" description="LRR 10" evidence="1">
    <location>
        <begin position="318"/>
        <end position="339"/>
    </location>
</feature>
<feature type="repeat" description="LRR 11" evidence="1">
    <location>
        <begin position="340"/>
        <end position="363"/>
    </location>
</feature>
<feature type="repeat" description="LRR 12" evidence="1">
    <location>
        <begin position="364"/>
        <end position="389"/>
    </location>
</feature>
<feature type="repeat" description="LRR 13" evidence="1">
    <location>
        <begin position="391"/>
        <end position="411"/>
    </location>
</feature>
<feature type="repeat" description="LRR 14" evidence="1">
    <location>
        <begin position="412"/>
        <end position="436"/>
    </location>
</feature>
<feature type="repeat" description="LRR 15" evidence="1">
    <location>
        <begin position="438"/>
        <end position="461"/>
    </location>
</feature>
<feature type="repeat" description="LRR 16" evidence="1">
    <location>
        <begin position="462"/>
        <end position="485"/>
    </location>
</feature>
<feature type="repeat" description="LRR 17" evidence="1">
    <location>
        <begin position="487"/>
        <end position="506"/>
    </location>
</feature>
<feature type="repeat" description="LRR 18" evidence="1">
    <location>
        <begin position="507"/>
        <end position="527"/>
    </location>
</feature>
<feature type="repeat" description="LRR 19" evidence="1">
    <location>
        <begin position="528"/>
        <end position="551"/>
    </location>
</feature>
<feature type="repeat" description="LRR 20" evidence="1">
    <location>
        <begin position="553"/>
        <end position="575"/>
    </location>
</feature>
<feature type="repeat" description="LRR 21" evidence="1">
    <location>
        <begin position="577"/>
        <end position="598"/>
    </location>
</feature>
<feature type="repeat" description="LRR 22" evidence="1">
    <location>
        <begin position="599"/>
        <end position="623"/>
    </location>
</feature>
<feature type="repeat" description="LRR 23" evidence="1">
    <location>
        <begin position="626"/>
        <end position="650"/>
    </location>
</feature>
<feature type="repeat" description="LRR 24" evidence="1">
    <location>
        <begin position="699"/>
        <end position="724"/>
    </location>
</feature>
<feature type="repeat" description="LRR 25" evidence="1">
    <location>
        <begin position="726"/>
        <end position="747"/>
    </location>
</feature>
<feature type="repeat" description="LRR 26" evidence="1">
    <location>
        <begin position="748"/>
        <end position="771"/>
    </location>
</feature>
<feature type="repeat" description="LRR 27" evidence="1">
    <location>
        <begin position="773"/>
        <end position="796"/>
    </location>
</feature>
<feature type="glycosylation site" description="N-linked (GlcNAc...) asparagine" evidence="2">
    <location>
        <position position="58"/>
    </location>
</feature>
<feature type="glycosylation site" description="N-linked (GlcNAc...) asparagine" evidence="2">
    <location>
        <position position="70"/>
    </location>
</feature>
<feature type="glycosylation site" description="N-linked (GlcNAc...) asparagine" evidence="2">
    <location>
        <position position="91"/>
    </location>
</feature>
<feature type="glycosylation site" description="N-linked (GlcNAc...) asparagine" evidence="2">
    <location>
        <position position="109"/>
    </location>
</feature>
<feature type="glycosylation site" description="N-linked (GlcNAc...) asparagine" evidence="2">
    <location>
        <position position="145"/>
    </location>
</feature>
<feature type="glycosylation site" description="N-linked (GlcNAc...) asparagine" evidence="2">
    <location>
        <position position="189"/>
    </location>
</feature>
<feature type="glycosylation site" description="N-linked (GlcNAc...) asparagine" evidence="2">
    <location>
        <position position="207"/>
    </location>
</feature>
<feature type="glycosylation site" description="N-linked (GlcNAc...) asparagine" evidence="2">
    <location>
        <position position="242"/>
    </location>
</feature>
<feature type="glycosylation site" description="N-linked (GlcNAc...) asparagine" evidence="2">
    <location>
        <position position="265"/>
    </location>
</feature>
<feature type="glycosylation site" description="N-linked (GlcNAc...) asparagine" evidence="2">
    <location>
        <position position="311"/>
    </location>
</feature>
<feature type="glycosylation site" description="N-linked (GlcNAc...) asparagine" evidence="2">
    <location>
        <position position="351"/>
    </location>
</feature>
<feature type="glycosylation site" description="N-linked (GlcNAc...) asparagine" evidence="2">
    <location>
        <position position="461"/>
    </location>
</feature>
<feature type="glycosylation site" description="N-linked (GlcNAc...) asparagine" evidence="2">
    <location>
        <position position="505"/>
    </location>
</feature>
<feature type="glycosylation site" description="N-linked (GlcNAc...) asparagine" evidence="2">
    <location>
        <position position="518"/>
    </location>
</feature>
<feature type="glycosylation site" description="N-linked (GlcNAc...) asparagine" evidence="2">
    <location>
        <position position="574"/>
    </location>
</feature>
<feature type="glycosylation site" description="N-linked (GlcNAc...) asparagine" evidence="2">
    <location>
        <position position="730"/>
    </location>
</feature>
<feature type="glycosylation site" description="N-linked (GlcNAc...) asparagine" evidence="2">
    <location>
        <position position="778"/>
    </location>
</feature>
<reference key="1">
    <citation type="journal article" date="1999" name="Nature">
        <title>Sequence and analysis of chromosome 2 of the plant Arabidopsis thaliana.</title>
        <authorList>
            <person name="Lin X."/>
            <person name="Kaul S."/>
            <person name="Rounsley S.D."/>
            <person name="Shea T.P."/>
            <person name="Benito M.-I."/>
            <person name="Town C.D."/>
            <person name="Fujii C.Y."/>
            <person name="Mason T.M."/>
            <person name="Bowman C.L."/>
            <person name="Barnstead M.E."/>
            <person name="Feldblyum T.V."/>
            <person name="Buell C.R."/>
            <person name="Ketchum K.A."/>
            <person name="Lee J.J."/>
            <person name="Ronning C.M."/>
            <person name="Koo H.L."/>
            <person name="Moffat K.S."/>
            <person name="Cronin L.A."/>
            <person name="Shen M."/>
            <person name="Pai G."/>
            <person name="Van Aken S."/>
            <person name="Umayam L."/>
            <person name="Tallon L.J."/>
            <person name="Gill J.E."/>
            <person name="Adams M.D."/>
            <person name="Carrera A.J."/>
            <person name="Creasy T.H."/>
            <person name="Goodman H.M."/>
            <person name="Somerville C.R."/>
            <person name="Copenhaver G.P."/>
            <person name="Preuss D."/>
            <person name="Nierman W.C."/>
            <person name="White O."/>
            <person name="Eisen J.A."/>
            <person name="Salzberg S.L."/>
            <person name="Fraser C.M."/>
            <person name="Venter J.C."/>
        </authorList>
    </citation>
    <scope>NUCLEOTIDE SEQUENCE [LARGE SCALE GENOMIC DNA]</scope>
    <source>
        <strain>cv. Columbia</strain>
    </source>
</reference>
<reference key="2">
    <citation type="journal article" date="2017" name="Plant J.">
        <title>Araport11: a complete reannotation of the Arabidopsis thaliana reference genome.</title>
        <authorList>
            <person name="Cheng C.Y."/>
            <person name="Krishnakumar V."/>
            <person name="Chan A.P."/>
            <person name="Thibaud-Nissen F."/>
            <person name="Schobel S."/>
            <person name="Town C.D."/>
        </authorList>
    </citation>
    <scope>GENOME REANNOTATION</scope>
    <source>
        <strain>cv. Columbia</strain>
    </source>
</reference>
<reference key="3">
    <citation type="journal article" date="2005" name="Plant Physiol.">
        <title>Phylogenomic analysis of the receptor-like proteins of rice and Arabidopsis.</title>
        <authorList>
            <person name="Fritz-Laylin L.K."/>
            <person name="Krishnamurthy N."/>
            <person name="Toer M."/>
            <person name="Sjoelander K.V."/>
            <person name="Jones J.D."/>
        </authorList>
    </citation>
    <scope>GENE FAMILY</scope>
</reference>
<reference key="4">
    <citation type="journal article" date="2008" name="Plant Physiol.">
        <title>A genome-wide functional investigation into the roles of receptor-like proteins in Arabidopsis.</title>
        <authorList>
            <person name="Wang G."/>
            <person name="Ellendorff U."/>
            <person name="Kemp B."/>
            <person name="Mansfield J.W."/>
            <person name="Forsyth A."/>
            <person name="Mitchell K."/>
            <person name="Bastas K."/>
            <person name="Liu C.-M."/>
            <person name="Woods-Toer A."/>
            <person name="Zipfel C."/>
            <person name="de Wit P.J.G.M."/>
            <person name="Jones J.D.G."/>
            <person name="Toer M."/>
            <person name="Thomma B.P.H.J."/>
        </authorList>
    </citation>
    <scope>GENE FAMILY</scope>
    <scope>NOMENCLATURE</scope>
</reference>
<reference key="5">
    <citation type="journal article" date="2014" name="Curr. Opin. Plant Biol.">
        <title>Receptor like proteins associate with SOBIR1-type of adaptors to form bimolecular receptor kinases.</title>
        <authorList>
            <person name="Gust A.A."/>
            <person name="Felix G."/>
        </authorList>
    </citation>
    <scope>REVIEW</scope>
</reference>
<reference key="6">
    <citation type="journal article" date="2014" name="Plant Signal. Behav.">
        <title>Arabidopsis thaliana receptor-like protein AtRLP23 associates with the receptor-like kinase AtSOBIR1.</title>
        <authorList>
            <person name="Bi G."/>
            <person name="Liebrand T.W."/>
            <person name="Cordewener J.H."/>
            <person name="America A.H."/>
            <person name="Xu X."/>
            <person name="Joosten M.H."/>
        </authorList>
    </citation>
    <scope>IDENTIFICATION BY MASS SPECTROMETRY</scope>
    <scope>INTERACTION WITH SOBIR1</scope>
</reference>
<reference key="7">
    <citation type="journal article" date="2015" name="Nat. Plants">
        <title>An RLP23-SOBIR1-BAK1 complex mediates NLP-triggered immunity.</title>
        <authorList>
            <person name="Albert I."/>
            <person name="Boehm H."/>
            <person name="Albert M."/>
            <person name="Feiler C.E."/>
            <person name="Imkampe J."/>
            <person name="Wallmeroth N."/>
            <person name="Brancato C."/>
            <person name="Raaymakers T.M."/>
            <person name="Oome S."/>
            <person name="Zhang H."/>
            <person name="Krol E."/>
            <person name="Grefen C."/>
            <person name="Gust A.A."/>
            <person name="Chai J."/>
            <person name="Hedrich R."/>
            <person name="Van den Ackerveken G."/>
            <person name="Nuernberger T."/>
        </authorList>
    </citation>
    <scope>FUNCTION</scope>
    <scope>SUBUNIT</scope>
    <scope>DISRUPTION PHENOTYPE</scope>
    <scope>COMPONENT OF THE RLP23-SOBIR1-BAK1 COMPLEX</scope>
</reference>
<reference key="8">
    <citation type="journal article" date="2016" name="J. Exp. Bot.">
        <title>Transcriptional regulation of receptor-like protein genes by environmental stresses and hormones and their overexpression activities in Arabidopsis thaliana.</title>
        <authorList>
            <person name="Wu J."/>
            <person name="Liu Z."/>
            <person name="Zhang Z."/>
            <person name="Lv Y."/>
            <person name="Yang N."/>
            <person name="Zhang G."/>
            <person name="Wu M."/>
            <person name="Lv S."/>
            <person name="Pan L."/>
            <person name="Joosten M.H."/>
            <person name="Wang G."/>
        </authorList>
    </citation>
    <scope>INDUCTION BY MANNITOL</scope>
</reference>
<gene>
    <name evidence="6" type="primary">RLP23</name>
    <name evidence="8" type="ordered locus">At2g32680</name>
    <name evidence="9" type="ORF">F24L7.18</name>
</gene>
<name>RLP23_ARATH</name>
<accession>O48849</accession>
<organism>
    <name type="scientific">Arabidopsis thaliana</name>
    <name type="common">Mouse-ear cress</name>
    <dbReference type="NCBI Taxonomy" id="3702"/>
    <lineage>
        <taxon>Eukaryota</taxon>
        <taxon>Viridiplantae</taxon>
        <taxon>Streptophyta</taxon>
        <taxon>Embryophyta</taxon>
        <taxon>Tracheophyta</taxon>
        <taxon>Spermatophyta</taxon>
        <taxon>Magnoliopsida</taxon>
        <taxon>eudicotyledons</taxon>
        <taxon>Gunneridae</taxon>
        <taxon>Pentapetalae</taxon>
        <taxon>rosids</taxon>
        <taxon>malvids</taxon>
        <taxon>Brassicales</taxon>
        <taxon>Brassicaceae</taxon>
        <taxon>Camelineae</taxon>
        <taxon>Arabidopsis</taxon>
    </lineage>
</organism>
<protein>
    <recommendedName>
        <fullName evidence="6">Receptor like protein 23</fullName>
        <shortName evidence="6">AtRLP23</shortName>
    </recommendedName>
</protein>
<dbReference type="EMBL" id="AC003974">
    <property type="protein sequence ID" value="AAC04495.1"/>
    <property type="molecule type" value="Genomic_DNA"/>
</dbReference>
<dbReference type="EMBL" id="CP002685">
    <property type="protein sequence ID" value="AEC08715.1"/>
    <property type="molecule type" value="Genomic_DNA"/>
</dbReference>
<dbReference type="PIR" id="T00800">
    <property type="entry name" value="T00800"/>
</dbReference>
<dbReference type="RefSeq" id="NP_180827.1">
    <property type="nucleotide sequence ID" value="NM_128827.2"/>
</dbReference>
<dbReference type="SMR" id="O48849"/>
<dbReference type="FunCoup" id="O48849">
    <property type="interactions" value="5"/>
</dbReference>
<dbReference type="STRING" id="3702.O48849"/>
<dbReference type="GlyCosmos" id="O48849">
    <property type="glycosylation" value="17 sites, No reported glycans"/>
</dbReference>
<dbReference type="GlyGen" id="O48849">
    <property type="glycosylation" value="17 sites"/>
</dbReference>
<dbReference type="PaxDb" id="3702-AT2G32680.1"/>
<dbReference type="ProteomicsDB" id="227996"/>
<dbReference type="EnsemblPlants" id="AT2G32680.1">
    <property type="protein sequence ID" value="AT2G32680.1"/>
    <property type="gene ID" value="AT2G32680"/>
</dbReference>
<dbReference type="GeneID" id="817828"/>
<dbReference type="Gramene" id="AT2G32680.1">
    <property type="protein sequence ID" value="AT2G32680.1"/>
    <property type="gene ID" value="AT2G32680"/>
</dbReference>
<dbReference type="KEGG" id="ath:AT2G32680"/>
<dbReference type="Araport" id="AT2G32680"/>
<dbReference type="TAIR" id="AT2G32680">
    <property type="gene designation" value="RLP23"/>
</dbReference>
<dbReference type="eggNOG" id="KOG0619">
    <property type="taxonomic scope" value="Eukaryota"/>
</dbReference>
<dbReference type="HOGENOM" id="CLU_000288_18_3_1"/>
<dbReference type="InParanoid" id="O48849"/>
<dbReference type="OMA" id="ISSERWD"/>
<dbReference type="PhylomeDB" id="O48849"/>
<dbReference type="PRO" id="PR:O48849"/>
<dbReference type="Proteomes" id="UP000006548">
    <property type="component" value="Chromosome 2"/>
</dbReference>
<dbReference type="ExpressionAtlas" id="O48849">
    <property type="expression patterns" value="baseline and differential"/>
</dbReference>
<dbReference type="GO" id="GO:0005783">
    <property type="term" value="C:endoplasmic reticulum"/>
    <property type="evidence" value="ECO:0007005"/>
    <property type="project" value="TAIR"/>
</dbReference>
<dbReference type="GO" id="GO:0005886">
    <property type="term" value="C:plasma membrane"/>
    <property type="evidence" value="ECO:0007669"/>
    <property type="project" value="UniProtKB-SubCell"/>
</dbReference>
<dbReference type="GO" id="GO:0019901">
    <property type="term" value="F:protein kinase binding"/>
    <property type="evidence" value="ECO:0000353"/>
    <property type="project" value="UniProtKB"/>
</dbReference>
<dbReference type="GO" id="GO:0042742">
    <property type="term" value="P:defense response to bacterium"/>
    <property type="evidence" value="ECO:0000315"/>
    <property type="project" value="UniProtKB"/>
</dbReference>
<dbReference type="GO" id="GO:0050832">
    <property type="term" value="P:defense response to fungus"/>
    <property type="evidence" value="ECO:0000315"/>
    <property type="project" value="UniProtKB"/>
</dbReference>
<dbReference type="GO" id="GO:0002229">
    <property type="term" value="P:defense response to oomycetes"/>
    <property type="evidence" value="ECO:0000315"/>
    <property type="project" value="UniProtKB"/>
</dbReference>
<dbReference type="GO" id="GO:0032491">
    <property type="term" value="P:detection of molecule of fungal origin"/>
    <property type="evidence" value="ECO:0000315"/>
    <property type="project" value="UniProtKB"/>
</dbReference>
<dbReference type="GO" id="GO:0002758">
    <property type="term" value="P:innate immune response-activating signaling pathway"/>
    <property type="evidence" value="ECO:0000315"/>
    <property type="project" value="UniProtKB"/>
</dbReference>
<dbReference type="GO" id="GO:0140426">
    <property type="term" value="P:pathogen-associated molecular pattern receptor signaling pathway"/>
    <property type="evidence" value="ECO:0000315"/>
    <property type="project" value="TAIR"/>
</dbReference>
<dbReference type="GO" id="GO:0010555">
    <property type="term" value="P:response to mannitol"/>
    <property type="evidence" value="ECO:0000315"/>
    <property type="project" value="UniProtKB"/>
</dbReference>
<dbReference type="GO" id="GO:0002237">
    <property type="term" value="P:response to molecule of bacterial origin"/>
    <property type="evidence" value="ECO:0000315"/>
    <property type="project" value="UniProtKB"/>
</dbReference>
<dbReference type="GO" id="GO:0002238">
    <property type="term" value="P:response to molecule of fungal origin"/>
    <property type="evidence" value="ECO:0000315"/>
    <property type="project" value="UniProtKB"/>
</dbReference>
<dbReference type="GO" id="GO:0002240">
    <property type="term" value="P:response to molecule of oomycetes origin"/>
    <property type="evidence" value="ECO:0000315"/>
    <property type="project" value="UniProtKB"/>
</dbReference>
<dbReference type="FunFam" id="3.80.10.10:FF:000383">
    <property type="entry name" value="Leucine-rich repeat receptor protein kinase EMS1"/>
    <property type="match status" value="1"/>
</dbReference>
<dbReference type="FunFam" id="3.80.10.10:FF:000041">
    <property type="entry name" value="LRR receptor-like serine/threonine-protein kinase ERECTA"/>
    <property type="match status" value="1"/>
</dbReference>
<dbReference type="FunFam" id="3.80.10.10:FF:000111">
    <property type="entry name" value="LRR receptor-like serine/threonine-protein kinase ERECTA"/>
    <property type="match status" value="1"/>
</dbReference>
<dbReference type="FunFam" id="3.80.10.10:FF:001696">
    <property type="entry name" value="Receptor like protein 39"/>
    <property type="match status" value="1"/>
</dbReference>
<dbReference type="Gene3D" id="3.80.10.10">
    <property type="entry name" value="Ribonuclease Inhibitor"/>
    <property type="match status" value="4"/>
</dbReference>
<dbReference type="InterPro" id="IPR001611">
    <property type="entry name" value="Leu-rich_rpt"/>
</dbReference>
<dbReference type="InterPro" id="IPR003591">
    <property type="entry name" value="Leu-rich_rpt_typical-subtyp"/>
</dbReference>
<dbReference type="InterPro" id="IPR032675">
    <property type="entry name" value="LRR_dom_sf"/>
</dbReference>
<dbReference type="InterPro" id="IPR055414">
    <property type="entry name" value="LRR_R13L4/SHOC2-like"/>
</dbReference>
<dbReference type="InterPro" id="IPR046956">
    <property type="entry name" value="RLP23-like"/>
</dbReference>
<dbReference type="PANTHER" id="PTHR48063">
    <property type="entry name" value="LRR RECEPTOR-LIKE KINASE"/>
    <property type="match status" value="1"/>
</dbReference>
<dbReference type="PANTHER" id="PTHR48063:SF112">
    <property type="entry name" value="RECEPTOR LIKE PROTEIN 30-LIKE"/>
    <property type="match status" value="1"/>
</dbReference>
<dbReference type="Pfam" id="PF00560">
    <property type="entry name" value="LRR_1"/>
    <property type="match status" value="2"/>
</dbReference>
<dbReference type="Pfam" id="PF23598">
    <property type="entry name" value="LRR_14"/>
    <property type="match status" value="1"/>
</dbReference>
<dbReference type="Pfam" id="PF13516">
    <property type="entry name" value="LRR_6"/>
    <property type="match status" value="1"/>
</dbReference>
<dbReference type="Pfam" id="PF13855">
    <property type="entry name" value="LRR_8"/>
    <property type="match status" value="2"/>
</dbReference>
<dbReference type="PRINTS" id="PR00019">
    <property type="entry name" value="LEURICHRPT"/>
</dbReference>
<dbReference type="SMART" id="SM00365">
    <property type="entry name" value="LRR_SD22"/>
    <property type="match status" value="4"/>
</dbReference>
<dbReference type="SMART" id="SM00369">
    <property type="entry name" value="LRR_TYP"/>
    <property type="match status" value="10"/>
</dbReference>
<dbReference type="SUPFAM" id="SSF52058">
    <property type="entry name" value="L domain-like"/>
    <property type="match status" value="3"/>
</dbReference>
<dbReference type="PROSITE" id="PS51450">
    <property type="entry name" value="LRR"/>
    <property type="match status" value="15"/>
</dbReference>